<accession>Q6DDW6</accession>
<reference key="1">
    <citation type="submission" date="2004-07" db="EMBL/GenBank/DDBJ databases">
        <authorList>
            <consortium name="NIH - Xenopus Gene Collection (XGC) project"/>
        </authorList>
    </citation>
    <scope>NUCLEOTIDE SEQUENCE [LARGE SCALE MRNA]</scope>
    <source>
        <tissue>Embryo</tissue>
    </source>
</reference>
<dbReference type="EMBL" id="BC077386">
    <property type="protein sequence ID" value="AAH77386.1"/>
    <property type="molecule type" value="mRNA"/>
</dbReference>
<dbReference type="RefSeq" id="NP_001086744.1">
    <property type="nucleotide sequence ID" value="NM_001093275.1"/>
</dbReference>
<dbReference type="RefSeq" id="XP_018100612.1">
    <property type="nucleotide sequence ID" value="XM_018245123.1"/>
</dbReference>
<dbReference type="SMR" id="Q6DDW6"/>
<dbReference type="GlyCosmos" id="Q6DDW6">
    <property type="glycosylation" value="2 sites, No reported glycans"/>
</dbReference>
<dbReference type="DNASU" id="446579"/>
<dbReference type="GeneID" id="446579"/>
<dbReference type="KEGG" id="xla:446579"/>
<dbReference type="AGR" id="Xenbase:XB-GENE-484939"/>
<dbReference type="CTD" id="446579"/>
<dbReference type="Xenbase" id="XB-GENE-484939">
    <property type="gene designation" value="gpr89b.L"/>
</dbReference>
<dbReference type="OMA" id="FSVYCVY"/>
<dbReference type="OrthoDB" id="264392at2759"/>
<dbReference type="Proteomes" id="UP000186698">
    <property type="component" value="Chromosome 2L"/>
</dbReference>
<dbReference type="Bgee" id="446579">
    <property type="expression patterns" value="Expressed in stomach and 19 other cell types or tissues"/>
</dbReference>
<dbReference type="GO" id="GO:0032580">
    <property type="term" value="C:Golgi cisterna membrane"/>
    <property type="evidence" value="ECO:0000318"/>
    <property type="project" value="GO_Central"/>
</dbReference>
<dbReference type="GO" id="GO:0000139">
    <property type="term" value="C:Golgi membrane"/>
    <property type="evidence" value="ECO:0007669"/>
    <property type="project" value="UniProtKB-SubCell"/>
</dbReference>
<dbReference type="GO" id="GO:0034702">
    <property type="term" value="C:monoatomic ion channel complex"/>
    <property type="evidence" value="ECO:0007669"/>
    <property type="project" value="UniProtKB-KW"/>
</dbReference>
<dbReference type="GO" id="GO:0008308">
    <property type="term" value="F:voltage-gated monoatomic anion channel activity"/>
    <property type="evidence" value="ECO:0000318"/>
    <property type="project" value="GO_Central"/>
</dbReference>
<dbReference type="GO" id="GO:0051452">
    <property type="term" value="P:intracellular pH reduction"/>
    <property type="evidence" value="ECO:0000318"/>
    <property type="project" value="GO_Central"/>
</dbReference>
<dbReference type="GO" id="GO:0015031">
    <property type="term" value="P:protein transport"/>
    <property type="evidence" value="ECO:0007669"/>
    <property type="project" value="UniProtKB-KW"/>
</dbReference>
<dbReference type="InterPro" id="IPR025969">
    <property type="entry name" value="ABA_GPCR_dom"/>
</dbReference>
<dbReference type="InterPro" id="IPR022535">
    <property type="entry name" value="Golgi_pH-regulator_cons_dom"/>
</dbReference>
<dbReference type="InterPro" id="IPR015672">
    <property type="entry name" value="GPHR/GTG"/>
</dbReference>
<dbReference type="PANTHER" id="PTHR15948">
    <property type="entry name" value="G-PROTEIN COUPLED RECEPTOR 89-RELATED"/>
    <property type="match status" value="1"/>
</dbReference>
<dbReference type="PANTHER" id="PTHR15948:SF0">
    <property type="entry name" value="GOLGI PH REGULATOR A-RELATED"/>
    <property type="match status" value="1"/>
</dbReference>
<dbReference type="Pfam" id="PF12430">
    <property type="entry name" value="ABA_GPCR"/>
    <property type="match status" value="1"/>
</dbReference>
<dbReference type="Pfam" id="PF12537">
    <property type="entry name" value="GPHR_N"/>
    <property type="match status" value="1"/>
</dbReference>
<keyword id="KW-0325">Glycoprotein</keyword>
<keyword id="KW-0333">Golgi apparatus</keyword>
<keyword id="KW-0407">Ion channel</keyword>
<keyword id="KW-0406">Ion transport</keyword>
<keyword id="KW-0472">Membrane</keyword>
<keyword id="KW-0653">Protein transport</keyword>
<keyword id="KW-1185">Reference proteome</keyword>
<keyword id="KW-0812">Transmembrane</keyword>
<keyword id="KW-1133">Transmembrane helix</keyword>
<keyword id="KW-0813">Transport</keyword>
<keyword id="KW-0851">Voltage-gated channel</keyword>
<protein>
    <recommendedName>
        <fullName evidence="1">Golgi pH regulator</fullName>
    </recommendedName>
    <alternativeName>
        <fullName>Protein gpr89b</fullName>
    </alternativeName>
</protein>
<proteinExistence type="evidence at transcript level"/>
<sequence>MSFFADSVLMVISQLLFFGFGWLFFMRQLFKDYEVRQYVVQVVFSVTFAFSCTMFELIIFEILGLLNSSSRYFHWKLNLCVILLVLVFVVPFYIGYFVVSNIRLLHRQRLLFSCTIWLTFMYFFWKLGDPFPILSPKHGILSIEQLISRVGVIGVTLMALLSGFGAVNCPYTYMSYFLRNVTDADILALERRLLQTMDMIVSKKKRIAAVRRNMFQRGEEHSKPSGFWGMIKSVTSSAPVSENLYQIQQEVDALEELSRQLFLETADLHATKERIEYSKTFQGKYFNFLGYFFSIYCVWKIFMATINIVFDRVGKTDPVTRGIEITVNYLGIQFDVKFWSQHISFILVGIIIVTSIRGLLITLTKFFYAISSSKSSNVIVLLLAQIMGMYFVSSVLLIRMSMPLEYRTIITEVLGELQFNFYHRWFDVIFLVSALSSILFLYLAHKQAPEKHMAL</sequence>
<comment type="function">
    <text evidence="1">Voltage-gated channel that enables the transfer of anions such as iodide, chloride, bromide and fluoride which may function in counter-ion conductance and participates in Golgi acidification.</text>
</comment>
<comment type="catalytic activity">
    <reaction evidence="1">
        <text>iodide(out) = iodide(in)</text>
        <dbReference type="Rhea" id="RHEA:66324"/>
        <dbReference type="ChEBI" id="CHEBI:16382"/>
    </reaction>
</comment>
<comment type="catalytic activity">
    <reaction evidence="1">
        <text>chloride(in) = chloride(out)</text>
        <dbReference type="Rhea" id="RHEA:29823"/>
        <dbReference type="ChEBI" id="CHEBI:17996"/>
    </reaction>
</comment>
<comment type="catalytic activity">
    <reaction evidence="1">
        <text>bromide(in) = bromide(out)</text>
        <dbReference type="Rhea" id="RHEA:75383"/>
        <dbReference type="ChEBI" id="CHEBI:15858"/>
    </reaction>
</comment>
<comment type="catalytic activity">
    <reaction evidence="1">
        <text>fluoride(in) = fluoride(out)</text>
        <dbReference type="Rhea" id="RHEA:76159"/>
        <dbReference type="ChEBI" id="CHEBI:17051"/>
    </reaction>
</comment>
<comment type="subunit">
    <text evidence="1">Homotrimer.</text>
</comment>
<comment type="subcellular location">
    <subcellularLocation>
        <location evidence="1">Golgi apparatus membrane</location>
        <topology evidence="2">Multi-pass membrane protein</topology>
    </subcellularLocation>
</comment>
<comment type="similarity">
    <text evidence="3">Belongs to the Golgi pH regulator (TC 1.A.38) family.</text>
</comment>
<name>GPHR_XENLA</name>
<evidence type="ECO:0000250" key="1">
    <source>
        <dbReference type="UniProtKB" id="P0CG08"/>
    </source>
</evidence>
<evidence type="ECO:0000255" key="2"/>
<evidence type="ECO:0000305" key="3"/>
<feature type="chain" id="PRO_0000395008" description="Golgi pH regulator">
    <location>
        <begin position="1"/>
        <end position="455"/>
    </location>
</feature>
<feature type="transmembrane region" description="Helical" evidence="2">
    <location>
        <begin position="5"/>
        <end position="25"/>
    </location>
</feature>
<feature type="transmembrane region" description="Helical" evidence="2">
    <location>
        <begin position="46"/>
        <end position="66"/>
    </location>
</feature>
<feature type="transmembrane region" description="Helical" evidence="2">
    <location>
        <begin position="79"/>
        <end position="99"/>
    </location>
</feature>
<feature type="transmembrane region" description="Helical" evidence="2">
    <location>
        <begin position="111"/>
        <end position="131"/>
    </location>
</feature>
<feature type="transmembrane region" description="Helical" evidence="2">
    <location>
        <begin position="150"/>
        <end position="170"/>
    </location>
</feature>
<feature type="transmembrane region" description="Helical" evidence="2">
    <location>
        <begin position="290"/>
        <end position="310"/>
    </location>
</feature>
<feature type="transmembrane region" description="Helical" evidence="2">
    <location>
        <begin position="343"/>
        <end position="363"/>
    </location>
</feature>
<feature type="transmembrane region" description="Helical" evidence="2">
    <location>
        <begin position="378"/>
        <end position="398"/>
    </location>
</feature>
<feature type="transmembrane region" description="Helical" evidence="2">
    <location>
        <begin position="425"/>
        <end position="445"/>
    </location>
</feature>
<feature type="glycosylation site" description="N-linked (GlcNAc...) asparagine" evidence="2">
    <location>
        <position position="67"/>
    </location>
</feature>
<feature type="glycosylation site" description="N-linked (GlcNAc...) asparagine" evidence="2">
    <location>
        <position position="180"/>
    </location>
</feature>
<gene>
    <name type="primary">gpr89-b</name>
    <name type="synonym">gphr</name>
</gene>
<organism>
    <name type="scientific">Xenopus laevis</name>
    <name type="common">African clawed frog</name>
    <dbReference type="NCBI Taxonomy" id="8355"/>
    <lineage>
        <taxon>Eukaryota</taxon>
        <taxon>Metazoa</taxon>
        <taxon>Chordata</taxon>
        <taxon>Craniata</taxon>
        <taxon>Vertebrata</taxon>
        <taxon>Euteleostomi</taxon>
        <taxon>Amphibia</taxon>
        <taxon>Batrachia</taxon>
        <taxon>Anura</taxon>
        <taxon>Pipoidea</taxon>
        <taxon>Pipidae</taxon>
        <taxon>Xenopodinae</taxon>
        <taxon>Xenopus</taxon>
        <taxon>Xenopus</taxon>
    </lineage>
</organism>